<gene>
    <name type="primary">Lgalsl</name>
    <name type="synonym">Grpa</name>
    <name type="synonym">Lgalsla</name>
</gene>
<keyword id="KW-0007">Acetylation</keyword>
<keyword id="KW-0430">Lectin</keyword>
<keyword id="KW-0597">Phosphoprotein</keyword>
<keyword id="KW-1185">Reference proteome</keyword>
<comment type="function">
    <text evidence="1">Does not bind lactose, and may not bind carbohydrates.</text>
</comment>
<comment type="subunit">
    <text evidence="1">Monomer.</text>
</comment>
<comment type="caution">
    <text evidence="4">Most of the residues in the galectin domain that have been shown to be critical for carbohydrate-binding in other galectins are not conserved.</text>
</comment>
<protein>
    <recommendedName>
        <fullName>Galectin-related protein</fullName>
    </recommendedName>
    <alternativeName>
        <fullName>Galectin-related protein A</fullName>
    </alternativeName>
    <alternativeName>
        <fullName>Lectin galactoside-binding-like protein A</fullName>
    </alternativeName>
</protein>
<accession>Q8VED9</accession>
<accession>Q8C4P8</accession>
<feature type="initiator methionine" description="Removed" evidence="2">
    <location>
        <position position="1"/>
    </location>
</feature>
<feature type="chain" id="PRO_0000315767" description="Galectin-related protein">
    <location>
        <begin position="2"/>
        <end position="172"/>
    </location>
</feature>
<feature type="domain" description="Galectin" evidence="3">
    <location>
        <begin position="39"/>
        <end position="168"/>
    </location>
</feature>
<feature type="modified residue" description="N-acetylalanine" evidence="2">
    <location>
        <position position="2"/>
    </location>
</feature>
<feature type="modified residue" description="Phosphoserine" evidence="2">
    <location>
        <position position="22"/>
    </location>
</feature>
<feature type="modified residue" description="Phosphoserine" evidence="2">
    <location>
        <position position="25"/>
    </location>
</feature>
<sequence length="172" mass="18956">MAGSVADSDAVVKLDDGHLNNSLGSPVQADVYFPRLIVPFCGHIKGGMRPGKKVLVMGIVDLNPESFAISLTCGDSEDPPADVAIELKAVFTDRQLLRNSCISGERGEEQSAIPYFPFIPDQPFRVEILCEHPRFRVFVDGHQLFDFYHRIQTLSAIDTIKINGDLQITKLG</sequence>
<organism>
    <name type="scientific">Mus musculus</name>
    <name type="common">Mouse</name>
    <dbReference type="NCBI Taxonomy" id="10090"/>
    <lineage>
        <taxon>Eukaryota</taxon>
        <taxon>Metazoa</taxon>
        <taxon>Chordata</taxon>
        <taxon>Craniata</taxon>
        <taxon>Vertebrata</taxon>
        <taxon>Euteleostomi</taxon>
        <taxon>Mammalia</taxon>
        <taxon>Eutheria</taxon>
        <taxon>Euarchontoglires</taxon>
        <taxon>Glires</taxon>
        <taxon>Rodentia</taxon>
        <taxon>Myomorpha</taxon>
        <taxon>Muroidea</taxon>
        <taxon>Muridae</taxon>
        <taxon>Murinae</taxon>
        <taxon>Mus</taxon>
        <taxon>Mus</taxon>
    </lineage>
</organism>
<dbReference type="EMBL" id="AK041053">
    <property type="protein sequence ID" value="BAC30800.1"/>
    <property type="molecule type" value="mRNA"/>
</dbReference>
<dbReference type="EMBL" id="AK081513">
    <property type="protein sequence ID" value="BAC38245.1"/>
    <property type="molecule type" value="mRNA"/>
</dbReference>
<dbReference type="EMBL" id="AK156350">
    <property type="protein sequence ID" value="BAE33684.1"/>
    <property type="molecule type" value="mRNA"/>
</dbReference>
<dbReference type="EMBL" id="AK167557">
    <property type="protein sequence ID" value="BAE39621.1"/>
    <property type="molecule type" value="mRNA"/>
</dbReference>
<dbReference type="EMBL" id="AL662817">
    <property type="status" value="NOT_ANNOTATED_CDS"/>
    <property type="molecule type" value="Genomic_DNA"/>
</dbReference>
<dbReference type="EMBL" id="BC019131">
    <property type="protein sequence ID" value="AAH19131.1"/>
    <property type="molecule type" value="mRNA"/>
</dbReference>
<dbReference type="CCDS" id="CCDS24461.1"/>
<dbReference type="RefSeq" id="NP_776113.1">
    <property type="nucleotide sequence ID" value="NM_173752.4"/>
</dbReference>
<dbReference type="SMR" id="Q8VED9"/>
<dbReference type="BioGRID" id="229759">
    <property type="interactions" value="1"/>
</dbReference>
<dbReference type="FunCoup" id="Q8VED9">
    <property type="interactions" value="136"/>
</dbReference>
<dbReference type="STRING" id="10090.ENSMUSP00000044342"/>
<dbReference type="iPTMnet" id="Q8VED9"/>
<dbReference type="PhosphoSitePlus" id="Q8VED9"/>
<dbReference type="SwissPalm" id="Q8VED9"/>
<dbReference type="jPOST" id="Q8VED9"/>
<dbReference type="PaxDb" id="10090-ENSMUSP00000044342"/>
<dbReference type="PeptideAtlas" id="Q8VED9"/>
<dbReference type="ProteomicsDB" id="264735"/>
<dbReference type="Pumba" id="Q8VED9"/>
<dbReference type="DNASU" id="216551"/>
<dbReference type="Ensembl" id="ENSMUST00000047028.9">
    <property type="protein sequence ID" value="ENSMUSP00000044342.9"/>
    <property type="gene ID" value="ENSMUSG00000042363.15"/>
</dbReference>
<dbReference type="GeneID" id="216551"/>
<dbReference type="KEGG" id="mmu:216551"/>
<dbReference type="UCSC" id="uc007idj.2">
    <property type="organism name" value="mouse"/>
</dbReference>
<dbReference type="AGR" id="MGI:1916114"/>
<dbReference type="CTD" id="29094"/>
<dbReference type="MGI" id="MGI:1916114">
    <property type="gene designation" value="Lgalsl"/>
</dbReference>
<dbReference type="VEuPathDB" id="HostDB:ENSMUSG00000042363"/>
<dbReference type="eggNOG" id="KOG3587">
    <property type="taxonomic scope" value="Eukaryota"/>
</dbReference>
<dbReference type="GeneTree" id="ENSGT00940000155337"/>
<dbReference type="HOGENOM" id="CLU_037794_2_1_1"/>
<dbReference type="InParanoid" id="Q8VED9"/>
<dbReference type="OMA" id="CISGEKG"/>
<dbReference type="OrthoDB" id="9857238at2759"/>
<dbReference type="PhylomeDB" id="Q8VED9"/>
<dbReference type="TreeFam" id="TF315551"/>
<dbReference type="BioGRID-ORCS" id="216551">
    <property type="hits" value="3 hits in 77 CRISPR screens"/>
</dbReference>
<dbReference type="PRO" id="PR:Q8VED9"/>
<dbReference type="Proteomes" id="UP000000589">
    <property type="component" value="Chromosome 11"/>
</dbReference>
<dbReference type="RNAct" id="Q8VED9">
    <property type="molecule type" value="protein"/>
</dbReference>
<dbReference type="Bgee" id="ENSMUSG00000042363">
    <property type="expression patterns" value="Expressed in tail skin and 258 other cell types or tissues"/>
</dbReference>
<dbReference type="GO" id="GO:0062023">
    <property type="term" value="C:collagen-containing extracellular matrix"/>
    <property type="evidence" value="ECO:0007005"/>
    <property type="project" value="BHF-UCL"/>
</dbReference>
<dbReference type="GO" id="GO:0030246">
    <property type="term" value="F:carbohydrate binding"/>
    <property type="evidence" value="ECO:0007669"/>
    <property type="project" value="UniProtKB-KW"/>
</dbReference>
<dbReference type="CDD" id="cd00070">
    <property type="entry name" value="GLECT"/>
    <property type="match status" value="1"/>
</dbReference>
<dbReference type="FunFam" id="2.60.120.200:FF:000046">
    <property type="entry name" value="Galectin"/>
    <property type="match status" value="1"/>
</dbReference>
<dbReference type="Gene3D" id="2.60.120.200">
    <property type="match status" value="1"/>
</dbReference>
<dbReference type="InterPro" id="IPR013320">
    <property type="entry name" value="ConA-like_dom_sf"/>
</dbReference>
<dbReference type="InterPro" id="IPR044156">
    <property type="entry name" value="Galectin-like"/>
</dbReference>
<dbReference type="InterPro" id="IPR001079">
    <property type="entry name" value="Galectin_CRD"/>
</dbReference>
<dbReference type="PANTHER" id="PTHR11346">
    <property type="entry name" value="GALECTIN"/>
    <property type="match status" value="1"/>
</dbReference>
<dbReference type="PANTHER" id="PTHR11346:SF98">
    <property type="entry name" value="GALECTIN-RELATED PROTEIN"/>
    <property type="match status" value="1"/>
</dbReference>
<dbReference type="Pfam" id="PF00337">
    <property type="entry name" value="Gal-bind_lectin"/>
    <property type="match status" value="1"/>
</dbReference>
<dbReference type="SMART" id="SM00908">
    <property type="entry name" value="Gal-bind_lectin"/>
    <property type="match status" value="1"/>
</dbReference>
<dbReference type="SMART" id="SM00276">
    <property type="entry name" value="GLECT"/>
    <property type="match status" value="1"/>
</dbReference>
<dbReference type="SUPFAM" id="SSF49899">
    <property type="entry name" value="Concanavalin A-like lectins/glucanases"/>
    <property type="match status" value="1"/>
</dbReference>
<dbReference type="PROSITE" id="PS51304">
    <property type="entry name" value="GALECTIN"/>
    <property type="match status" value="1"/>
</dbReference>
<name>LEGL_MOUSE</name>
<evidence type="ECO:0000250" key="1"/>
<evidence type="ECO:0000250" key="2">
    <source>
        <dbReference type="UniProtKB" id="Q3ZCW2"/>
    </source>
</evidence>
<evidence type="ECO:0000255" key="3">
    <source>
        <dbReference type="PROSITE-ProRule" id="PRU00639"/>
    </source>
</evidence>
<evidence type="ECO:0000305" key="4"/>
<reference key="1">
    <citation type="journal article" date="2005" name="Science">
        <title>The transcriptional landscape of the mammalian genome.</title>
        <authorList>
            <person name="Carninci P."/>
            <person name="Kasukawa T."/>
            <person name="Katayama S."/>
            <person name="Gough J."/>
            <person name="Frith M.C."/>
            <person name="Maeda N."/>
            <person name="Oyama R."/>
            <person name="Ravasi T."/>
            <person name="Lenhard B."/>
            <person name="Wells C."/>
            <person name="Kodzius R."/>
            <person name="Shimokawa K."/>
            <person name="Bajic V.B."/>
            <person name="Brenner S.E."/>
            <person name="Batalov S."/>
            <person name="Forrest A.R."/>
            <person name="Zavolan M."/>
            <person name="Davis M.J."/>
            <person name="Wilming L.G."/>
            <person name="Aidinis V."/>
            <person name="Allen J.E."/>
            <person name="Ambesi-Impiombato A."/>
            <person name="Apweiler R."/>
            <person name="Aturaliya R.N."/>
            <person name="Bailey T.L."/>
            <person name="Bansal M."/>
            <person name="Baxter L."/>
            <person name="Beisel K.W."/>
            <person name="Bersano T."/>
            <person name="Bono H."/>
            <person name="Chalk A.M."/>
            <person name="Chiu K.P."/>
            <person name="Choudhary V."/>
            <person name="Christoffels A."/>
            <person name="Clutterbuck D.R."/>
            <person name="Crowe M.L."/>
            <person name="Dalla E."/>
            <person name="Dalrymple B.P."/>
            <person name="de Bono B."/>
            <person name="Della Gatta G."/>
            <person name="di Bernardo D."/>
            <person name="Down T."/>
            <person name="Engstrom P."/>
            <person name="Fagiolini M."/>
            <person name="Faulkner G."/>
            <person name="Fletcher C.F."/>
            <person name="Fukushima T."/>
            <person name="Furuno M."/>
            <person name="Futaki S."/>
            <person name="Gariboldi M."/>
            <person name="Georgii-Hemming P."/>
            <person name="Gingeras T.R."/>
            <person name="Gojobori T."/>
            <person name="Green R.E."/>
            <person name="Gustincich S."/>
            <person name="Harbers M."/>
            <person name="Hayashi Y."/>
            <person name="Hensch T.K."/>
            <person name="Hirokawa N."/>
            <person name="Hill D."/>
            <person name="Huminiecki L."/>
            <person name="Iacono M."/>
            <person name="Ikeo K."/>
            <person name="Iwama A."/>
            <person name="Ishikawa T."/>
            <person name="Jakt M."/>
            <person name="Kanapin A."/>
            <person name="Katoh M."/>
            <person name="Kawasawa Y."/>
            <person name="Kelso J."/>
            <person name="Kitamura H."/>
            <person name="Kitano H."/>
            <person name="Kollias G."/>
            <person name="Krishnan S.P."/>
            <person name="Kruger A."/>
            <person name="Kummerfeld S.K."/>
            <person name="Kurochkin I.V."/>
            <person name="Lareau L.F."/>
            <person name="Lazarevic D."/>
            <person name="Lipovich L."/>
            <person name="Liu J."/>
            <person name="Liuni S."/>
            <person name="McWilliam S."/>
            <person name="Madan Babu M."/>
            <person name="Madera M."/>
            <person name="Marchionni L."/>
            <person name="Matsuda H."/>
            <person name="Matsuzawa S."/>
            <person name="Miki H."/>
            <person name="Mignone F."/>
            <person name="Miyake S."/>
            <person name="Morris K."/>
            <person name="Mottagui-Tabar S."/>
            <person name="Mulder N."/>
            <person name="Nakano N."/>
            <person name="Nakauchi H."/>
            <person name="Ng P."/>
            <person name="Nilsson R."/>
            <person name="Nishiguchi S."/>
            <person name="Nishikawa S."/>
            <person name="Nori F."/>
            <person name="Ohara O."/>
            <person name="Okazaki Y."/>
            <person name="Orlando V."/>
            <person name="Pang K.C."/>
            <person name="Pavan W.J."/>
            <person name="Pavesi G."/>
            <person name="Pesole G."/>
            <person name="Petrovsky N."/>
            <person name="Piazza S."/>
            <person name="Reed J."/>
            <person name="Reid J.F."/>
            <person name="Ring B.Z."/>
            <person name="Ringwald M."/>
            <person name="Rost B."/>
            <person name="Ruan Y."/>
            <person name="Salzberg S.L."/>
            <person name="Sandelin A."/>
            <person name="Schneider C."/>
            <person name="Schoenbach C."/>
            <person name="Sekiguchi K."/>
            <person name="Semple C.A."/>
            <person name="Seno S."/>
            <person name="Sessa L."/>
            <person name="Sheng Y."/>
            <person name="Shibata Y."/>
            <person name="Shimada H."/>
            <person name="Shimada K."/>
            <person name="Silva D."/>
            <person name="Sinclair B."/>
            <person name="Sperling S."/>
            <person name="Stupka E."/>
            <person name="Sugiura K."/>
            <person name="Sultana R."/>
            <person name="Takenaka Y."/>
            <person name="Taki K."/>
            <person name="Tammoja K."/>
            <person name="Tan S.L."/>
            <person name="Tang S."/>
            <person name="Taylor M.S."/>
            <person name="Tegner J."/>
            <person name="Teichmann S.A."/>
            <person name="Ueda H.R."/>
            <person name="van Nimwegen E."/>
            <person name="Verardo R."/>
            <person name="Wei C.L."/>
            <person name="Yagi K."/>
            <person name="Yamanishi H."/>
            <person name="Zabarovsky E."/>
            <person name="Zhu S."/>
            <person name="Zimmer A."/>
            <person name="Hide W."/>
            <person name="Bult C."/>
            <person name="Grimmond S.M."/>
            <person name="Teasdale R.D."/>
            <person name="Liu E.T."/>
            <person name="Brusic V."/>
            <person name="Quackenbush J."/>
            <person name="Wahlestedt C."/>
            <person name="Mattick J.S."/>
            <person name="Hume D.A."/>
            <person name="Kai C."/>
            <person name="Sasaki D."/>
            <person name="Tomaru Y."/>
            <person name="Fukuda S."/>
            <person name="Kanamori-Katayama M."/>
            <person name="Suzuki M."/>
            <person name="Aoki J."/>
            <person name="Arakawa T."/>
            <person name="Iida J."/>
            <person name="Imamura K."/>
            <person name="Itoh M."/>
            <person name="Kato T."/>
            <person name="Kawaji H."/>
            <person name="Kawagashira N."/>
            <person name="Kawashima T."/>
            <person name="Kojima M."/>
            <person name="Kondo S."/>
            <person name="Konno H."/>
            <person name="Nakano K."/>
            <person name="Ninomiya N."/>
            <person name="Nishio T."/>
            <person name="Okada M."/>
            <person name="Plessy C."/>
            <person name="Shibata K."/>
            <person name="Shiraki T."/>
            <person name="Suzuki S."/>
            <person name="Tagami M."/>
            <person name="Waki K."/>
            <person name="Watahiki A."/>
            <person name="Okamura-Oho Y."/>
            <person name="Suzuki H."/>
            <person name="Kawai J."/>
            <person name="Hayashizaki Y."/>
        </authorList>
    </citation>
    <scope>NUCLEOTIDE SEQUENCE [LARGE SCALE MRNA]</scope>
    <source>
        <strain>C57BL/6J</strain>
        <strain>NOD</strain>
        <tissue>Aorta</tissue>
        <tissue>Head</tissue>
        <tissue>Placenta</tissue>
        <tissue>Spleen</tissue>
        <tissue>Vein</tissue>
    </source>
</reference>
<reference key="2">
    <citation type="journal article" date="2009" name="PLoS Biol.">
        <title>Lineage-specific biology revealed by a finished genome assembly of the mouse.</title>
        <authorList>
            <person name="Church D.M."/>
            <person name="Goodstadt L."/>
            <person name="Hillier L.W."/>
            <person name="Zody M.C."/>
            <person name="Goldstein S."/>
            <person name="She X."/>
            <person name="Bult C.J."/>
            <person name="Agarwala R."/>
            <person name="Cherry J.L."/>
            <person name="DiCuccio M."/>
            <person name="Hlavina W."/>
            <person name="Kapustin Y."/>
            <person name="Meric P."/>
            <person name="Maglott D."/>
            <person name="Birtle Z."/>
            <person name="Marques A.C."/>
            <person name="Graves T."/>
            <person name="Zhou S."/>
            <person name="Teague B."/>
            <person name="Potamousis K."/>
            <person name="Churas C."/>
            <person name="Place M."/>
            <person name="Herschleb J."/>
            <person name="Runnheim R."/>
            <person name="Forrest D."/>
            <person name="Amos-Landgraf J."/>
            <person name="Schwartz D.C."/>
            <person name="Cheng Z."/>
            <person name="Lindblad-Toh K."/>
            <person name="Eichler E.E."/>
            <person name="Ponting C.P."/>
        </authorList>
    </citation>
    <scope>NUCLEOTIDE SEQUENCE [LARGE SCALE GENOMIC DNA]</scope>
    <source>
        <strain>C57BL/6J</strain>
    </source>
</reference>
<reference key="3">
    <citation type="journal article" date="2004" name="Genome Res.">
        <title>The status, quality, and expansion of the NIH full-length cDNA project: the Mammalian Gene Collection (MGC).</title>
        <authorList>
            <consortium name="The MGC Project Team"/>
        </authorList>
    </citation>
    <scope>NUCLEOTIDE SEQUENCE [LARGE SCALE MRNA]</scope>
    <source>
        <strain>Czech II</strain>
        <tissue>Mammary tumor</tissue>
    </source>
</reference>
<reference key="4">
    <citation type="journal article" date="2010" name="Cell">
        <title>A tissue-specific atlas of mouse protein phosphorylation and expression.</title>
        <authorList>
            <person name="Huttlin E.L."/>
            <person name="Jedrychowski M.P."/>
            <person name="Elias J.E."/>
            <person name="Goswami T."/>
            <person name="Rad R."/>
            <person name="Beausoleil S.A."/>
            <person name="Villen J."/>
            <person name="Haas W."/>
            <person name="Sowa M.E."/>
            <person name="Gygi S.P."/>
        </authorList>
    </citation>
    <scope>IDENTIFICATION BY MASS SPECTROMETRY [LARGE SCALE ANALYSIS]</scope>
    <source>
        <tissue>Brain</tissue>
        <tissue>Brown adipose tissue</tissue>
        <tissue>Kidney</tissue>
        <tissue>Liver</tissue>
        <tissue>Lung</tissue>
        <tissue>Pancreas</tissue>
        <tissue>Spleen</tissue>
        <tissue>Testis</tissue>
    </source>
</reference>
<proteinExistence type="evidence at protein level"/>